<gene>
    <name evidence="1" type="primary">gluQ</name>
    <name type="ordered locus">PSPA7_5440</name>
</gene>
<organism>
    <name type="scientific">Pseudomonas paraeruginosa (strain DSM 24068 / PA7)</name>
    <name type="common">Pseudomonas aeruginosa (strain PA7)</name>
    <dbReference type="NCBI Taxonomy" id="381754"/>
    <lineage>
        <taxon>Bacteria</taxon>
        <taxon>Pseudomonadati</taxon>
        <taxon>Pseudomonadota</taxon>
        <taxon>Gammaproteobacteria</taxon>
        <taxon>Pseudomonadales</taxon>
        <taxon>Pseudomonadaceae</taxon>
        <taxon>Pseudomonas</taxon>
        <taxon>Pseudomonas paraeruginosa</taxon>
    </lineage>
</organism>
<proteinExistence type="inferred from homology"/>
<sequence>MTSSYVGRFAPTPSGYLHFGSLVAAVASYLDARAVGGRWLVRMEDLDPPREVPGAQRAILETLERYGFEWDGAVERQSERFPAYASVIEQLLRSGLAYACTCSRKQLEDFAGIYPGFCRDAGHARDDAAIRLRVPELEYRFVDRVQGEVCQHLGREVGDFVIQRRDGLYAYQLAVVLDDAWQGITDIVRGADLLDSTPRQLYLQELLGLSQPRYLHVPLIVQPDGHKLGKSYRSPPLPAEQAAVPLTRALRALGQRPPAELAEGSAGEALAWGVAHWDATRIPRRATLPEESL</sequence>
<feature type="chain" id="PRO_1000024361" description="Glutamyl-Q tRNA(Asp) synthetase">
    <location>
        <begin position="1"/>
        <end position="293"/>
    </location>
</feature>
<feature type="short sequence motif" description="'HIGH' region">
    <location>
        <begin position="11"/>
        <end position="21"/>
    </location>
</feature>
<feature type="short sequence motif" description="'KMSKS' region">
    <location>
        <begin position="227"/>
        <end position="231"/>
    </location>
</feature>
<feature type="binding site" evidence="1">
    <location>
        <begin position="8"/>
        <end position="12"/>
    </location>
    <ligand>
        <name>L-glutamate</name>
        <dbReference type="ChEBI" id="CHEBI:29985"/>
    </ligand>
</feature>
<feature type="binding site" evidence="1">
    <location>
        <position position="44"/>
    </location>
    <ligand>
        <name>L-glutamate</name>
        <dbReference type="ChEBI" id="CHEBI:29985"/>
    </ligand>
</feature>
<feature type="binding site" evidence="1">
    <location>
        <position position="100"/>
    </location>
    <ligand>
        <name>Zn(2+)</name>
        <dbReference type="ChEBI" id="CHEBI:29105"/>
    </ligand>
</feature>
<feature type="binding site" evidence="1">
    <location>
        <position position="102"/>
    </location>
    <ligand>
        <name>Zn(2+)</name>
        <dbReference type="ChEBI" id="CHEBI:29105"/>
    </ligand>
</feature>
<feature type="binding site" evidence="1">
    <location>
        <position position="114"/>
    </location>
    <ligand>
        <name>Zn(2+)</name>
        <dbReference type="ChEBI" id="CHEBI:29105"/>
    </ligand>
</feature>
<feature type="binding site" evidence="1">
    <location>
        <position position="118"/>
    </location>
    <ligand>
        <name>Zn(2+)</name>
        <dbReference type="ChEBI" id="CHEBI:29105"/>
    </ligand>
</feature>
<feature type="binding site" evidence="1">
    <location>
        <position position="171"/>
    </location>
    <ligand>
        <name>L-glutamate</name>
        <dbReference type="ChEBI" id="CHEBI:29985"/>
    </ligand>
</feature>
<feature type="binding site" evidence="1">
    <location>
        <position position="189"/>
    </location>
    <ligand>
        <name>L-glutamate</name>
        <dbReference type="ChEBI" id="CHEBI:29985"/>
    </ligand>
</feature>
<feature type="binding site" evidence="1">
    <location>
        <position position="230"/>
    </location>
    <ligand>
        <name>ATP</name>
        <dbReference type="ChEBI" id="CHEBI:30616"/>
    </ligand>
</feature>
<comment type="function">
    <text evidence="1">Catalyzes the tRNA-independent activation of glutamate in presence of ATP and the subsequent transfer of glutamate onto a tRNA(Asp). Glutamate is transferred on the 2-amino-5-(4,5-dihydroxy-2-cyclopenten-1-yl) moiety of the queuosine in the wobble position of the QUC anticodon.</text>
</comment>
<comment type="cofactor">
    <cofactor evidence="1">
        <name>Zn(2+)</name>
        <dbReference type="ChEBI" id="CHEBI:29105"/>
    </cofactor>
    <text evidence="1">Binds 1 zinc ion per subunit.</text>
</comment>
<comment type="similarity">
    <text evidence="1">Belongs to the class-I aminoacyl-tRNA synthetase family. GluQ subfamily.</text>
</comment>
<dbReference type="EC" id="6.1.1.-" evidence="1"/>
<dbReference type="EMBL" id="CP000744">
    <property type="protein sequence ID" value="ABR82422.1"/>
    <property type="molecule type" value="Genomic_DNA"/>
</dbReference>
<dbReference type="RefSeq" id="WP_012077477.1">
    <property type="nucleotide sequence ID" value="NC_009656.1"/>
</dbReference>
<dbReference type="SMR" id="A6VCH9"/>
<dbReference type="KEGG" id="pap:PSPA7_5440"/>
<dbReference type="HOGENOM" id="CLU_015768_0_1_6"/>
<dbReference type="Proteomes" id="UP000001582">
    <property type="component" value="Chromosome"/>
</dbReference>
<dbReference type="GO" id="GO:0005829">
    <property type="term" value="C:cytosol"/>
    <property type="evidence" value="ECO:0007669"/>
    <property type="project" value="TreeGrafter"/>
</dbReference>
<dbReference type="GO" id="GO:0005524">
    <property type="term" value="F:ATP binding"/>
    <property type="evidence" value="ECO:0007669"/>
    <property type="project" value="UniProtKB-KW"/>
</dbReference>
<dbReference type="GO" id="GO:0004818">
    <property type="term" value="F:glutamate-tRNA ligase activity"/>
    <property type="evidence" value="ECO:0007669"/>
    <property type="project" value="TreeGrafter"/>
</dbReference>
<dbReference type="GO" id="GO:0008270">
    <property type="term" value="F:zinc ion binding"/>
    <property type="evidence" value="ECO:0007669"/>
    <property type="project" value="UniProtKB-UniRule"/>
</dbReference>
<dbReference type="GO" id="GO:0006424">
    <property type="term" value="P:glutamyl-tRNA aminoacylation"/>
    <property type="evidence" value="ECO:0007669"/>
    <property type="project" value="InterPro"/>
</dbReference>
<dbReference type="GO" id="GO:0006400">
    <property type="term" value="P:tRNA modification"/>
    <property type="evidence" value="ECO:0007669"/>
    <property type="project" value="InterPro"/>
</dbReference>
<dbReference type="FunFam" id="3.40.50.620:FF:000093">
    <property type="entry name" value="Glutamyl-Q tRNA(Asp) synthetase"/>
    <property type="match status" value="1"/>
</dbReference>
<dbReference type="Gene3D" id="3.40.50.620">
    <property type="entry name" value="HUPs"/>
    <property type="match status" value="1"/>
</dbReference>
<dbReference type="HAMAP" id="MF_01428">
    <property type="entry name" value="Glu_Q_tRNA_synth"/>
    <property type="match status" value="1"/>
</dbReference>
<dbReference type="InterPro" id="IPR022380">
    <property type="entry name" value="Glu-Q_tRNA(Asp)_Synthase"/>
</dbReference>
<dbReference type="InterPro" id="IPR000924">
    <property type="entry name" value="Glu/Gln-tRNA-synth"/>
</dbReference>
<dbReference type="InterPro" id="IPR020058">
    <property type="entry name" value="Glu/Gln-tRNA-synth_Ib_cat-dom"/>
</dbReference>
<dbReference type="InterPro" id="IPR049940">
    <property type="entry name" value="GluQ/Sye"/>
</dbReference>
<dbReference type="InterPro" id="IPR014729">
    <property type="entry name" value="Rossmann-like_a/b/a_fold"/>
</dbReference>
<dbReference type="NCBIfam" id="NF004314">
    <property type="entry name" value="PRK05710.1-3"/>
    <property type="match status" value="1"/>
</dbReference>
<dbReference type="NCBIfam" id="TIGR03838">
    <property type="entry name" value="queuosine_YadB"/>
    <property type="match status" value="1"/>
</dbReference>
<dbReference type="PANTHER" id="PTHR43311">
    <property type="entry name" value="GLUTAMATE--TRNA LIGASE"/>
    <property type="match status" value="1"/>
</dbReference>
<dbReference type="PANTHER" id="PTHR43311:SF1">
    <property type="entry name" value="GLUTAMYL-Q TRNA(ASP) SYNTHETASE"/>
    <property type="match status" value="1"/>
</dbReference>
<dbReference type="Pfam" id="PF00749">
    <property type="entry name" value="tRNA-synt_1c"/>
    <property type="match status" value="2"/>
</dbReference>
<dbReference type="PRINTS" id="PR00987">
    <property type="entry name" value="TRNASYNTHGLU"/>
</dbReference>
<dbReference type="SUPFAM" id="SSF52374">
    <property type="entry name" value="Nucleotidylyl transferase"/>
    <property type="match status" value="1"/>
</dbReference>
<keyword id="KW-0030">Aminoacyl-tRNA synthetase</keyword>
<keyword id="KW-0067">ATP-binding</keyword>
<keyword id="KW-0436">Ligase</keyword>
<keyword id="KW-0479">Metal-binding</keyword>
<keyword id="KW-0547">Nucleotide-binding</keyword>
<keyword id="KW-0862">Zinc</keyword>
<accession>A6VCH9</accession>
<protein>
    <recommendedName>
        <fullName evidence="1">Glutamyl-Q tRNA(Asp) synthetase</fullName>
        <shortName evidence="1">Glu-Q-RSs</shortName>
        <ecNumber evidence="1">6.1.1.-</ecNumber>
    </recommendedName>
</protein>
<name>GLUQ_PSEP7</name>
<reference key="1">
    <citation type="submission" date="2007-06" db="EMBL/GenBank/DDBJ databases">
        <authorList>
            <person name="Dodson R.J."/>
            <person name="Harkins D."/>
            <person name="Paulsen I.T."/>
        </authorList>
    </citation>
    <scope>NUCLEOTIDE SEQUENCE [LARGE SCALE GENOMIC DNA]</scope>
    <source>
        <strain>DSM 24068 / PA7</strain>
    </source>
</reference>
<evidence type="ECO:0000255" key="1">
    <source>
        <dbReference type="HAMAP-Rule" id="MF_01428"/>
    </source>
</evidence>